<gene>
    <name evidence="2" type="primary">rpsL</name>
    <name type="ordered locus">Ccon26_06660</name>
    <name type="ORF">CCC13826_0179</name>
</gene>
<keyword id="KW-0488">Methylation</keyword>
<keyword id="KW-0687">Ribonucleoprotein</keyword>
<keyword id="KW-0689">Ribosomal protein</keyword>
<keyword id="KW-0694">RNA-binding</keyword>
<keyword id="KW-0699">rRNA-binding</keyword>
<keyword id="KW-0820">tRNA-binding</keyword>
<name>RS12_CAMC1</name>
<dbReference type="EMBL" id="CP000792">
    <property type="protein sequence ID" value="ABW74765.1"/>
    <property type="molecule type" value="Genomic_DNA"/>
</dbReference>
<dbReference type="RefSeq" id="WP_002941121.1">
    <property type="nucleotide sequence ID" value="NC_009802.2"/>
</dbReference>
<dbReference type="SMR" id="A8Z6I5"/>
<dbReference type="STRING" id="360104.CCC13826_0179"/>
<dbReference type="KEGG" id="cco:CCC13826_0179"/>
<dbReference type="eggNOG" id="COG0048">
    <property type="taxonomic scope" value="Bacteria"/>
</dbReference>
<dbReference type="HOGENOM" id="CLU_104295_1_2_7"/>
<dbReference type="OrthoDB" id="9802366at2"/>
<dbReference type="Proteomes" id="UP000001121">
    <property type="component" value="Chromosome"/>
</dbReference>
<dbReference type="GO" id="GO:0015935">
    <property type="term" value="C:small ribosomal subunit"/>
    <property type="evidence" value="ECO:0007669"/>
    <property type="project" value="InterPro"/>
</dbReference>
<dbReference type="GO" id="GO:0019843">
    <property type="term" value="F:rRNA binding"/>
    <property type="evidence" value="ECO:0007669"/>
    <property type="project" value="UniProtKB-UniRule"/>
</dbReference>
<dbReference type="GO" id="GO:0003735">
    <property type="term" value="F:structural constituent of ribosome"/>
    <property type="evidence" value="ECO:0007669"/>
    <property type="project" value="InterPro"/>
</dbReference>
<dbReference type="GO" id="GO:0000049">
    <property type="term" value="F:tRNA binding"/>
    <property type="evidence" value="ECO:0007669"/>
    <property type="project" value="UniProtKB-UniRule"/>
</dbReference>
<dbReference type="GO" id="GO:0006412">
    <property type="term" value="P:translation"/>
    <property type="evidence" value="ECO:0007669"/>
    <property type="project" value="UniProtKB-UniRule"/>
</dbReference>
<dbReference type="CDD" id="cd03368">
    <property type="entry name" value="Ribosomal_S12"/>
    <property type="match status" value="1"/>
</dbReference>
<dbReference type="FunFam" id="2.40.50.140:FF:000001">
    <property type="entry name" value="30S ribosomal protein S12"/>
    <property type="match status" value="1"/>
</dbReference>
<dbReference type="Gene3D" id="2.40.50.140">
    <property type="entry name" value="Nucleic acid-binding proteins"/>
    <property type="match status" value="1"/>
</dbReference>
<dbReference type="HAMAP" id="MF_00403_B">
    <property type="entry name" value="Ribosomal_uS12_B"/>
    <property type="match status" value="1"/>
</dbReference>
<dbReference type="InterPro" id="IPR012340">
    <property type="entry name" value="NA-bd_OB-fold"/>
</dbReference>
<dbReference type="InterPro" id="IPR006032">
    <property type="entry name" value="Ribosomal_uS12"/>
</dbReference>
<dbReference type="InterPro" id="IPR005679">
    <property type="entry name" value="Ribosomal_uS12_bac"/>
</dbReference>
<dbReference type="NCBIfam" id="TIGR00981">
    <property type="entry name" value="rpsL_bact"/>
    <property type="match status" value="1"/>
</dbReference>
<dbReference type="PANTHER" id="PTHR11652">
    <property type="entry name" value="30S RIBOSOMAL PROTEIN S12 FAMILY MEMBER"/>
    <property type="match status" value="1"/>
</dbReference>
<dbReference type="Pfam" id="PF00164">
    <property type="entry name" value="Ribosom_S12_S23"/>
    <property type="match status" value="1"/>
</dbReference>
<dbReference type="PIRSF" id="PIRSF002133">
    <property type="entry name" value="Ribosomal_S12/S23"/>
    <property type="match status" value="1"/>
</dbReference>
<dbReference type="PRINTS" id="PR01034">
    <property type="entry name" value="RIBOSOMALS12"/>
</dbReference>
<dbReference type="SUPFAM" id="SSF50249">
    <property type="entry name" value="Nucleic acid-binding proteins"/>
    <property type="match status" value="1"/>
</dbReference>
<dbReference type="PROSITE" id="PS00055">
    <property type="entry name" value="RIBOSOMAL_S12"/>
    <property type="match status" value="1"/>
</dbReference>
<proteinExistence type="inferred from homology"/>
<organism>
    <name type="scientific">Campylobacter concisus (strain 13826)</name>
    <dbReference type="NCBI Taxonomy" id="360104"/>
    <lineage>
        <taxon>Bacteria</taxon>
        <taxon>Pseudomonadati</taxon>
        <taxon>Campylobacterota</taxon>
        <taxon>Epsilonproteobacteria</taxon>
        <taxon>Campylobacterales</taxon>
        <taxon>Campylobacteraceae</taxon>
        <taxon>Campylobacter</taxon>
    </lineage>
</organism>
<protein>
    <recommendedName>
        <fullName evidence="2">Small ribosomal subunit protein uS12</fullName>
    </recommendedName>
    <alternativeName>
        <fullName evidence="3">30S ribosomal protein S12</fullName>
    </alternativeName>
</protein>
<reference key="1">
    <citation type="submission" date="2007-10" db="EMBL/GenBank/DDBJ databases">
        <title>Genome sequence of Campylobacter concisus 13826 isolated from human feces.</title>
        <authorList>
            <person name="Fouts D.E."/>
            <person name="Mongodin E.F."/>
            <person name="Puiu D."/>
            <person name="Sebastian Y."/>
            <person name="Miller W.G."/>
            <person name="Mandrell R.E."/>
            <person name="On S."/>
            <person name="Nelson K.E."/>
        </authorList>
    </citation>
    <scope>NUCLEOTIDE SEQUENCE [LARGE SCALE GENOMIC DNA]</scope>
    <source>
        <strain>13826</strain>
    </source>
</reference>
<accession>A8Z6I5</accession>
<feature type="chain" id="PRO_1000072253" description="Small ribosomal subunit protein uS12">
    <location>
        <begin position="1"/>
        <end position="131"/>
    </location>
</feature>
<feature type="modified residue" description="3-methylthioaspartic acid" evidence="1">
    <location>
        <position position="89"/>
    </location>
</feature>
<sequence>MPTINQLVRNERKKVTVKSKSPALKECPQRRGVCTRVYTTTPKKPNSALRKVAKVRLTSGFEVISYIGGEGHNLQEHSIVLVRGGRVKDLPGVKYHIVRGALDTAGVAKRTVSRSKYGAKRPKAGAAAPKK</sequence>
<evidence type="ECO:0000250" key="1"/>
<evidence type="ECO:0000255" key="2">
    <source>
        <dbReference type="HAMAP-Rule" id="MF_00403"/>
    </source>
</evidence>
<evidence type="ECO:0000305" key="3"/>
<comment type="function">
    <text evidence="2">With S4 and S5 plays an important role in translational accuracy.</text>
</comment>
<comment type="function">
    <text evidence="2">Interacts with and stabilizes bases of the 16S rRNA that are involved in tRNA selection in the A site and with the mRNA backbone. Located at the interface of the 30S and 50S subunits, it traverses the body of the 30S subunit contacting proteins on the other side and probably holding the rRNA structure together. The combined cluster of proteins S8, S12 and S17 appears to hold together the shoulder and platform of the 30S subunit.</text>
</comment>
<comment type="subunit">
    <text evidence="2">Part of the 30S ribosomal subunit. Contacts proteins S8 and S17. May interact with IF1 in the 30S initiation complex.</text>
</comment>
<comment type="similarity">
    <text evidence="2">Belongs to the universal ribosomal protein uS12 family.</text>
</comment>